<gene>
    <name type="primary">MT-CYB</name>
    <name type="synonym">COB</name>
    <name type="synonym">CYTB</name>
    <name type="synonym">MTCYB</name>
</gene>
<name>CYB_RHEAM</name>
<geneLocation type="mitochondrion"/>
<dbReference type="EMBL" id="U76054">
    <property type="protein sequence ID" value="AAB61324.1"/>
    <property type="molecule type" value="Genomic_DNA"/>
</dbReference>
<dbReference type="SMR" id="O03545"/>
<dbReference type="GO" id="GO:0005743">
    <property type="term" value="C:mitochondrial inner membrane"/>
    <property type="evidence" value="ECO:0007669"/>
    <property type="project" value="UniProtKB-SubCell"/>
</dbReference>
<dbReference type="GO" id="GO:0045275">
    <property type="term" value="C:respiratory chain complex III"/>
    <property type="evidence" value="ECO:0007669"/>
    <property type="project" value="InterPro"/>
</dbReference>
<dbReference type="GO" id="GO:0046872">
    <property type="term" value="F:metal ion binding"/>
    <property type="evidence" value="ECO:0007669"/>
    <property type="project" value="UniProtKB-KW"/>
</dbReference>
<dbReference type="GO" id="GO:0008121">
    <property type="term" value="F:ubiquinol-cytochrome-c reductase activity"/>
    <property type="evidence" value="ECO:0007669"/>
    <property type="project" value="InterPro"/>
</dbReference>
<dbReference type="GO" id="GO:0006122">
    <property type="term" value="P:mitochondrial electron transport, ubiquinol to cytochrome c"/>
    <property type="evidence" value="ECO:0007669"/>
    <property type="project" value="TreeGrafter"/>
</dbReference>
<dbReference type="CDD" id="cd00290">
    <property type="entry name" value="cytochrome_b_C"/>
    <property type="match status" value="1"/>
</dbReference>
<dbReference type="CDD" id="cd00284">
    <property type="entry name" value="Cytochrome_b_N"/>
    <property type="match status" value="1"/>
</dbReference>
<dbReference type="FunFam" id="1.20.810.10:FF:000002">
    <property type="entry name" value="Cytochrome b"/>
    <property type="match status" value="1"/>
</dbReference>
<dbReference type="Gene3D" id="1.20.810.10">
    <property type="entry name" value="Cytochrome Bc1 Complex, Chain C"/>
    <property type="match status" value="1"/>
</dbReference>
<dbReference type="InterPro" id="IPR005798">
    <property type="entry name" value="Cyt_b/b6_C"/>
</dbReference>
<dbReference type="InterPro" id="IPR036150">
    <property type="entry name" value="Cyt_b/b6_C_sf"/>
</dbReference>
<dbReference type="InterPro" id="IPR005797">
    <property type="entry name" value="Cyt_b/b6_N"/>
</dbReference>
<dbReference type="InterPro" id="IPR027387">
    <property type="entry name" value="Cytb/b6-like_sf"/>
</dbReference>
<dbReference type="InterPro" id="IPR030689">
    <property type="entry name" value="Cytochrome_b"/>
</dbReference>
<dbReference type="InterPro" id="IPR048260">
    <property type="entry name" value="Cytochrome_b_C_euk/bac"/>
</dbReference>
<dbReference type="InterPro" id="IPR048259">
    <property type="entry name" value="Cytochrome_b_N_euk/bac"/>
</dbReference>
<dbReference type="InterPro" id="IPR016174">
    <property type="entry name" value="Di-haem_cyt_TM"/>
</dbReference>
<dbReference type="PANTHER" id="PTHR19271">
    <property type="entry name" value="CYTOCHROME B"/>
    <property type="match status" value="1"/>
</dbReference>
<dbReference type="PANTHER" id="PTHR19271:SF16">
    <property type="entry name" value="CYTOCHROME B"/>
    <property type="match status" value="1"/>
</dbReference>
<dbReference type="Pfam" id="PF00032">
    <property type="entry name" value="Cytochrom_B_C"/>
    <property type="match status" value="1"/>
</dbReference>
<dbReference type="Pfam" id="PF00033">
    <property type="entry name" value="Cytochrome_B"/>
    <property type="match status" value="1"/>
</dbReference>
<dbReference type="PIRSF" id="PIRSF038885">
    <property type="entry name" value="COB"/>
    <property type="match status" value="1"/>
</dbReference>
<dbReference type="SUPFAM" id="SSF81648">
    <property type="entry name" value="a domain/subunit of cytochrome bc1 complex (Ubiquinol-cytochrome c reductase)"/>
    <property type="match status" value="1"/>
</dbReference>
<dbReference type="SUPFAM" id="SSF81342">
    <property type="entry name" value="Transmembrane di-heme cytochromes"/>
    <property type="match status" value="1"/>
</dbReference>
<dbReference type="PROSITE" id="PS51003">
    <property type="entry name" value="CYTB_CTER"/>
    <property type="match status" value="1"/>
</dbReference>
<dbReference type="PROSITE" id="PS51002">
    <property type="entry name" value="CYTB_NTER"/>
    <property type="match status" value="1"/>
</dbReference>
<protein>
    <recommendedName>
        <fullName>Cytochrome b</fullName>
    </recommendedName>
    <alternativeName>
        <fullName>Complex III subunit 3</fullName>
    </alternativeName>
    <alternativeName>
        <fullName>Complex III subunit III</fullName>
    </alternativeName>
    <alternativeName>
        <fullName>Cytochrome b-c1 complex subunit 3</fullName>
    </alternativeName>
    <alternativeName>
        <fullName>Ubiquinol-cytochrome-c reductase complex cytochrome b subunit</fullName>
    </alternativeName>
</protein>
<proteinExistence type="inferred from homology"/>
<organism>
    <name type="scientific">Rhea americana</name>
    <name type="common">Greater rhea</name>
    <name type="synonym">Common rhea</name>
    <dbReference type="NCBI Taxonomy" id="8797"/>
    <lineage>
        <taxon>Eukaryota</taxon>
        <taxon>Metazoa</taxon>
        <taxon>Chordata</taxon>
        <taxon>Craniata</taxon>
        <taxon>Vertebrata</taxon>
        <taxon>Euteleostomi</taxon>
        <taxon>Archelosauria</taxon>
        <taxon>Archosauria</taxon>
        <taxon>Dinosauria</taxon>
        <taxon>Saurischia</taxon>
        <taxon>Theropoda</taxon>
        <taxon>Coelurosauria</taxon>
        <taxon>Aves</taxon>
        <taxon>Palaeognathae</taxon>
        <taxon>Rheiformes</taxon>
        <taxon>Rheidae</taxon>
        <taxon>Rhea</taxon>
    </lineage>
</organism>
<accession>O03545</accession>
<keyword id="KW-0249">Electron transport</keyword>
<keyword id="KW-0349">Heme</keyword>
<keyword id="KW-0408">Iron</keyword>
<keyword id="KW-0472">Membrane</keyword>
<keyword id="KW-0479">Metal-binding</keyword>
<keyword id="KW-0496">Mitochondrion</keyword>
<keyword id="KW-0999">Mitochondrion inner membrane</keyword>
<keyword id="KW-0679">Respiratory chain</keyword>
<keyword id="KW-0812">Transmembrane</keyword>
<keyword id="KW-1133">Transmembrane helix</keyword>
<keyword id="KW-0813">Transport</keyword>
<keyword id="KW-0830">Ubiquinone</keyword>
<feature type="chain" id="PRO_0000061494" description="Cytochrome b">
    <location>
        <begin position="1"/>
        <end position="379"/>
    </location>
</feature>
<feature type="transmembrane region" description="Helical" evidence="2">
    <location>
        <begin position="34"/>
        <end position="54"/>
    </location>
</feature>
<feature type="transmembrane region" description="Helical" evidence="2">
    <location>
        <begin position="78"/>
        <end position="99"/>
    </location>
</feature>
<feature type="transmembrane region" description="Helical" evidence="2">
    <location>
        <begin position="114"/>
        <end position="134"/>
    </location>
</feature>
<feature type="transmembrane region" description="Helical" evidence="2">
    <location>
        <begin position="179"/>
        <end position="199"/>
    </location>
</feature>
<feature type="transmembrane region" description="Helical" evidence="2">
    <location>
        <begin position="227"/>
        <end position="247"/>
    </location>
</feature>
<feature type="transmembrane region" description="Helical" evidence="2">
    <location>
        <begin position="289"/>
        <end position="309"/>
    </location>
</feature>
<feature type="transmembrane region" description="Helical" evidence="2">
    <location>
        <begin position="321"/>
        <end position="341"/>
    </location>
</feature>
<feature type="transmembrane region" description="Helical" evidence="2">
    <location>
        <begin position="348"/>
        <end position="368"/>
    </location>
</feature>
<feature type="binding site" description="axial binding residue" evidence="2">
    <location>
        <position position="84"/>
    </location>
    <ligand>
        <name>heme b</name>
        <dbReference type="ChEBI" id="CHEBI:60344"/>
        <label>b562</label>
    </ligand>
    <ligandPart>
        <name>Fe</name>
        <dbReference type="ChEBI" id="CHEBI:18248"/>
    </ligandPart>
</feature>
<feature type="binding site" description="axial binding residue" evidence="2">
    <location>
        <position position="98"/>
    </location>
    <ligand>
        <name>heme b</name>
        <dbReference type="ChEBI" id="CHEBI:60344"/>
        <label>b566</label>
    </ligand>
    <ligandPart>
        <name>Fe</name>
        <dbReference type="ChEBI" id="CHEBI:18248"/>
    </ligandPart>
</feature>
<feature type="binding site" description="axial binding residue" evidence="2">
    <location>
        <position position="183"/>
    </location>
    <ligand>
        <name>heme b</name>
        <dbReference type="ChEBI" id="CHEBI:60344"/>
        <label>b562</label>
    </ligand>
    <ligandPart>
        <name>Fe</name>
        <dbReference type="ChEBI" id="CHEBI:18248"/>
    </ligandPart>
</feature>
<feature type="binding site" description="axial binding residue" evidence="2">
    <location>
        <position position="197"/>
    </location>
    <ligand>
        <name>heme b</name>
        <dbReference type="ChEBI" id="CHEBI:60344"/>
        <label>b566</label>
    </ligand>
    <ligandPart>
        <name>Fe</name>
        <dbReference type="ChEBI" id="CHEBI:18248"/>
    </ligandPart>
</feature>
<feature type="binding site" evidence="2">
    <location>
        <position position="202"/>
    </location>
    <ligand>
        <name>a ubiquinone</name>
        <dbReference type="ChEBI" id="CHEBI:16389"/>
    </ligand>
</feature>
<comment type="function">
    <text evidence="2">Component of the ubiquinol-cytochrome c reductase complex (complex III or cytochrome b-c1 complex) that is part of the mitochondrial respiratory chain. The b-c1 complex mediates electron transfer from ubiquinol to cytochrome c. Contributes to the generation of a proton gradient across the mitochondrial membrane that is then used for ATP synthesis.</text>
</comment>
<comment type="cofactor">
    <cofactor evidence="2">
        <name>heme b</name>
        <dbReference type="ChEBI" id="CHEBI:60344"/>
    </cofactor>
    <text evidence="2">Binds 2 heme b groups non-covalently.</text>
</comment>
<comment type="subunit">
    <text evidence="2">The cytochrome bc1 complex contains 11 subunits: 3 respiratory subunits (MT-CYB, CYC1 and UQCRFS1), 2 core proteins (UQCRC1 and UQCRC2) and 6 low-molecular weight proteins (UQCRH/QCR6, UQCRB/QCR7, UQCRQ/QCR8, UQCR10/QCR9, UQCR11/QCR10 and a cleavage product of UQCRFS1). This cytochrome bc1 complex then forms a dimer.</text>
</comment>
<comment type="subcellular location">
    <subcellularLocation>
        <location evidence="2">Mitochondrion inner membrane</location>
        <topology evidence="2">Multi-pass membrane protein</topology>
    </subcellularLocation>
</comment>
<comment type="miscellaneous">
    <text evidence="1">Heme 1 (or BL or b562) is low-potential and absorbs at about 562 nm, and heme 2 (or BH or b566) is high-potential and absorbs at about 566 nm.</text>
</comment>
<comment type="similarity">
    <text evidence="3 4">Belongs to the cytochrome b family.</text>
</comment>
<comment type="caution">
    <text evidence="2">The full-length protein contains only eight transmembrane helices, not nine as predicted by bioinformatics tools.</text>
</comment>
<evidence type="ECO:0000250" key="1"/>
<evidence type="ECO:0000250" key="2">
    <source>
        <dbReference type="UniProtKB" id="P00157"/>
    </source>
</evidence>
<evidence type="ECO:0000255" key="3">
    <source>
        <dbReference type="PROSITE-ProRule" id="PRU00967"/>
    </source>
</evidence>
<evidence type="ECO:0000255" key="4">
    <source>
        <dbReference type="PROSITE-ProRule" id="PRU00968"/>
    </source>
</evidence>
<reference key="1">
    <citation type="book" date="1997" name="Avian molecular evolution and systematics">
        <title>Phylogenetic relationships of the ratite birds: resolving conflicts between molecular and morphological data sets.</title>
        <editorList>
            <person name="Mindell D.P."/>
        </editorList>
        <authorList>
            <person name="Lee K."/>
            <person name="Feinstein J."/>
            <person name="Cracraft J."/>
        </authorList>
    </citation>
    <scope>NUCLEOTIDE SEQUENCE [GENOMIC DNA]</scope>
</reference>
<sequence length="379" mass="42476">MAPNIRKSHPLLKIINSSLIDLPSPSNISAWWNFGSLLGICLITQILTGLLLAMHYTADTSLAFSSVAHTCRNVQYGWLIRNLHANGASFFFICIYLHIGRGFYYGSYLYKETWNTGVVLLLTLMATAFVGYVLPWGQMSFWGATVITNLFSAIPYIGQTLVEWAWGGFSVDNPTLTRFFALHFLLPFLIAGITLIHLTFLHETGSNNPLGIVSHSDKIPFHPYFSLKDALGFALMFIPLLTLAFFSPNLLGDPENFTPANPLVTPPHIKPEWYFLFAYAILRSIPNKLGGVLALAASVLILFLIPFLHKSKQRSMTFRPLSQILFWLLVANLLILTWIGSQPVEHPFIIIGQMASFSYFLILLVLFPAIGALENKMLY</sequence>